<feature type="chain" id="PRO_0000116190" description="Probable membrane antigen 3">
    <location>
        <begin position="1"/>
        <end position="1246"/>
    </location>
</feature>
<dbReference type="EMBL" id="X64346">
    <property type="protein sequence ID" value="CAA45625.1"/>
    <property type="molecule type" value="Genomic_DNA"/>
</dbReference>
<dbReference type="RefSeq" id="NP_040204.1">
    <property type="nucleotide sequence ID" value="NC_001350.1"/>
</dbReference>
<dbReference type="SMR" id="Q01000"/>
<dbReference type="KEGG" id="vg:1682503"/>
<dbReference type="Proteomes" id="UP000000587">
    <property type="component" value="Segment"/>
</dbReference>
<dbReference type="GO" id="GO:0043657">
    <property type="term" value="C:host cell"/>
    <property type="evidence" value="ECO:0007669"/>
    <property type="project" value="GOC"/>
</dbReference>
<dbReference type="GO" id="GO:0019033">
    <property type="term" value="C:viral tegument"/>
    <property type="evidence" value="ECO:0007669"/>
    <property type="project" value="UniProtKB-SubCell"/>
</dbReference>
<dbReference type="GO" id="GO:0004642">
    <property type="term" value="F:phosphoribosylformylglycinamidine synthase activity"/>
    <property type="evidence" value="ECO:0007669"/>
    <property type="project" value="TreeGrafter"/>
</dbReference>
<dbReference type="GO" id="GO:0075733">
    <property type="term" value="P:intracellular transport of virus"/>
    <property type="evidence" value="ECO:0007669"/>
    <property type="project" value="InterPro"/>
</dbReference>
<dbReference type="GO" id="GO:0006164">
    <property type="term" value="P:purine nucleotide biosynthetic process"/>
    <property type="evidence" value="ECO:0007669"/>
    <property type="project" value="TreeGrafter"/>
</dbReference>
<dbReference type="Gene3D" id="3.40.50.880">
    <property type="match status" value="1"/>
</dbReference>
<dbReference type="Gene3D" id="3.90.650.10">
    <property type="entry name" value="PurM-like C-terminal domain"/>
    <property type="match status" value="1"/>
</dbReference>
<dbReference type="InterPro" id="IPR029062">
    <property type="entry name" value="Class_I_gatase-like"/>
</dbReference>
<dbReference type="InterPro" id="IPR010077">
    <property type="entry name" value="Herpes_virus_tegument"/>
</dbReference>
<dbReference type="InterPro" id="IPR010918">
    <property type="entry name" value="PurM-like_C_dom"/>
</dbReference>
<dbReference type="InterPro" id="IPR036676">
    <property type="entry name" value="PurM-like_C_sf"/>
</dbReference>
<dbReference type="InterPro" id="IPR036921">
    <property type="entry name" value="PurM-like_N_sf"/>
</dbReference>
<dbReference type="InterPro" id="IPR024346">
    <property type="entry name" value="Tegument_herpes_virus_N"/>
</dbReference>
<dbReference type="NCBIfam" id="TIGR01739">
    <property type="entry name" value="tegu_FGAM_synt"/>
    <property type="match status" value="1"/>
</dbReference>
<dbReference type="PANTHER" id="PTHR10099">
    <property type="entry name" value="PHOSPHORIBOSYLFORMYLGLYCINAMIDINE SYNTHASE"/>
    <property type="match status" value="1"/>
</dbReference>
<dbReference type="PANTHER" id="PTHR10099:SF1">
    <property type="entry name" value="PHOSPHORIBOSYLFORMYLGLYCINAMIDINE SYNTHASE"/>
    <property type="match status" value="1"/>
</dbReference>
<dbReference type="Pfam" id="PF02769">
    <property type="entry name" value="AIRS_C"/>
    <property type="match status" value="1"/>
</dbReference>
<dbReference type="Pfam" id="PF13507">
    <property type="entry name" value="GATase_5"/>
    <property type="match status" value="1"/>
</dbReference>
<dbReference type="Pfam" id="PF12818">
    <property type="entry name" value="Tegument_dsDNA"/>
    <property type="match status" value="1"/>
</dbReference>
<dbReference type="SMART" id="SM01211">
    <property type="entry name" value="GATase_5"/>
    <property type="match status" value="1"/>
</dbReference>
<dbReference type="SUPFAM" id="SSF52317">
    <property type="entry name" value="Class I glutamine amidotransferase-like"/>
    <property type="match status" value="1"/>
</dbReference>
<dbReference type="SUPFAM" id="SSF56042">
    <property type="entry name" value="PurM C-terminal domain-like"/>
    <property type="match status" value="1"/>
</dbReference>
<dbReference type="SUPFAM" id="SSF55326">
    <property type="entry name" value="PurM N-terminal domain-like"/>
    <property type="match status" value="1"/>
</dbReference>
<reference key="1">
    <citation type="journal article" date="1992" name="J. Virol.">
        <title>Primary structure of the herpesvirus saimiri genome.</title>
        <authorList>
            <person name="Albrecht J.-C."/>
            <person name="Nicholas J."/>
            <person name="Biller D."/>
            <person name="Cameron K.R."/>
            <person name="Biesinger B."/>
            <person name="Newman C."/>
            <person name="Wittmann S."/>
            <person name="Craxton M.A."/>
            <person name="Coleman H."/>
            <person name="Fleckenstein B."/>
            <person name="Honess R.W."/>
        </authorList>
    </citation>
    <scope>NUCLEOTIDE SEQUENCE [LARGE SCALE GENOMIC DNA]</scope>
</reference>
<protein>
    <recommendedName>
        <fullName>Probable membrane antigen 3</fullName>
    </recommendedName>
    <alternativeName>
        <fullName>Tegument protein</fullName>
    </alternativeName>
</protein>
<accession>Q01000</accession>
<organismHost>
    <name type="scientific">Saimiri sciureus</name>
    <name type="common">Common squirrel monkey</name>
    <dbReference type="NCBI Taxonomy" id="9521"/>
</organismHost>
<evidence type="ECO:0000305" key="1"/>
<comment type="subcellular location">
    <subcellularLocation>
        <location evidence="1">Virion tegument</location>
    </subcellularLocation>
</comment>
<organism>
    <name type="scientific">Saimiriine herpesvirus 2 (strain 11)</name>
    <name type="common">SaHV-2</name>
    <name type="synonym">Herpesvirus saimiri</name>
    <dbReference type="NCBI Taxonomy" id="10383"/>
    <lineage>
        <taxon>Viruses</taxon>
        <taxon>Duplodnaviria</taxon>
        <taxon>Heunggongvirae</taxon>
        <taxon>Peploviricota</taxon>
        <taxon>Herviviricetes</taxon>
        <taxon>Herpesvirales</taxon>
        <taxon>Orthoherpesviridae</taxon>
        <taxon>Gammaherpesvirinae</taxon>
        <taxon>Rhadinovirus</taxon>
        <taxon>Rhadinovirus saimiriinegamma2</taxon>
        <taxon>Saimiriine herpesvirus 2</taxon>
    </lineage>
</organism>
<gene>
    <name type="primary">3</name>
</gene>
<proteinExistence type="predicted"/>
<name>VP03_SHV21</name>
<sequence length="1246" mass="138936">MLVLHFNLYEAQILPHERLATSVFLEHGPLQVTSFNPTTTTGYVVYVNSPNASFLEPVLSKLFQSVSPKLPFFKFSEQTLSFSYGPHLQGSQTTFSKDLVDVVKNLSMFTPQGPENAFTVERIEYYRTIHIICDLKDPKKRHIRHLQKMLCNPYTGLTNFVIPQDKRLEMDVLDAESAVSAPLSDPLWTMSNGLFNLLGYSSQYSVFKRGAAPKVFVEKNSRLAISMNIDYWNPWSSTNMLYDGLHAIEKGLIYSFGSFTPTPSLTSVFNMAQHWYVPMFSACQIGHVMQLPLQTHELSLTGSLPMKMLQAHLNLLKCSSMPHIQGFFRLVPKDLSHILPQTKIYNGFISTSLCLQTINMANEHPLQDKTYLYQLGNFFTYHKQFLTCQESGKEIGSILTALAFFLDSVKTYPGTIVGMSTSLPVASMKAKLAAVCQQVCGARLLVSALPPQVVAKLAPFSPSNRVENKKMLKQYFFNLLTSDLIIAIKNVNIDAQAALKTACYMAGCRFKKIGLLTHLKGTEVVDNTVERPYPILRFDRFKPKFPLLSSPTSITFLEERINWQDLNLRDTILKILEHPSVGCKEFIVNHTDKLISGRVARTSIVGPWQLPVSDYSILVPMHPCTTEEVRENPWDYETDIDSHCVFEEAAVAGICSAIGESTILTQADLKVGTIRAITEAILNLSMVPWNNIGNIVIQLSITLPYTAHVSTYLQLVMETAKTFCEALRVSCTFTANATEGGASIVASAIVNTLDVSKCITPDLKFNNSFLFLLTTEKDYSLFGSVAQQILEKTFIGEIPSATSPVMLKKMLSVLQTLIKDESVVSGHDVSDGGLVATVAEMALSGGKGVRVYVPHGEDAIKFLCSETPGVVIEVQGSKMYYVQQFLHSENINFQIIGESTSSLTFSISQNLTKLVHEPLELFKSAWRSFSDACEPCQIHPRPYRMQIATVPKYCPVGPCRFHTVIVYLLPNNSVPHGLLNAIEEAGFQPRLVSIHQPSKTTNVYDPHTVWGFFIVGASNVQDEDVGMRALIAQLKSHVAFQRDLRTMLAKPDVFSVAIGALACELLFYNKAIGYNKPSDTYMTCVKNSSRKFESRWSNIYIPESTKAIAFQSLKNSLIPCWTQGTHLKFYHPKPMLEKMEESGMVSSMFYGHSLSSGPAQNYPLTPNGENAIAGVCSADGRHLALLHDPSLCNNLWQWPYVPLENPPLKVSPWKTMFLDLHKWGITVQGASPPPSRTSDPLRSFVF</sequence>
<keyword id="KW-1185">Reference proteome</keyword>
<keyword id="KW-0946">Virion</keyword>
<keyword id="KW-0920">Virion tegument</keyword>